<keyword id="KW-0067">ATP-binding</keyword>
<keyword id="KW-0143">Chaperone</keyword>
<keyword id="KW-0547">Nucleotide-binding</keyword>
<keyword id="KW-0597">Phosphoprotein</keyword>
<keyword id="KW-1185">Reference proteome</keyword>
<keyword id="KW-0346">Stress response</keyword>
<evidence type="ECO:0000250" key="1"/>
<evidence type="ECO:0000256" key="2">
    <source>
        <dbReference type="SAM" id="MobiDB-lite"/>
    </source>
</evidence>
<evidence type="ECO:0000305" key="3"/>
<protein>
    <recommendedName>
        <fullName>Chaperone protein DnaK</fullName>
    </recommendedName>
    <alternativeName>
        <fullName>HSP70</fullName>
    </alternativeName>
    <alternativeName>
        <fullName>Heat shock 70 kDa protein</fullName>
    </alternativeName>
    <alternativeName>
        <fullName>Heat shock protein 70</fullName>
    </alternativeName>
</protein>
<dbReference type="EMBL" id="AE000657">
    <property type="protein sequence ID" value="AAC07071.1"/>
    <property type="molecule type" value="Genomic_DNA"/>
</dbReference>
<dbReference type="PIR" id="C70386">
    <property type="entry name" value="C70386"/>
</dbReference>
<dbReference type="RefSeq" id="NP_213681.1">
    <property type="nucleotide sequence ID" value="NC_000918.1"/>
</dbReference>
<dbReference type="RefSeq" id="WP_010880619.1">
    <property type="nucleotide sequence ID" value="NC_000918.1"/>
</dbReference>
<dbReference type="SMR" id="O67118"/>
<dbReference type="FunCoup" id="O67118">
    <property type="interactions" value="488"/>
</dbReference>
<dbReference type="STRING" id="224324.aq_996"/>
<dbReference type="EnsemblBacteria" id="AAC07071">
    <property type="protein sequence ID" value="AAC07071"/>
    <property type="gene ID" value="aq_996"/>
</dbReference>
<dbReference type="KEGG" id="aae:aq_996"/>
<dbReference type="PATRIC" id="fig|224324.8.peg.781"/>
<dbReference type="eggNOG" id="COG0443">
    <property type="taxonomic scope" value="Bacteria"/>
</dbReference>
<dbReference type="HOGENOM" id="CLU_005965_2_1_0"/>
<dbReference type="InParanoid" id="O67118"/>
<dbReference type="OrthoDB" id="9766019at2"/>
<dbReference type="Proteomes" id="UP000000798">
    <property type="component" value="Chromosome"/>
</dbReference>
<dbReference type="GO" id="GO:0005524">
    <property type="term" value="F:ATP binding"/>
    <property type="evidence" value="ECO:0007669"/>
    <property type="project" value="UniProtKB-UniRule"/>
</dbReference>
<dbReference type="GO" id="GO:0016887">
    <property type="term" value="F:ATP hydrolysis activity"/>
    <property type="evidence" value="ECO:0000318"/>
    <property type="project" value="GO_Central"/>
</dbReference>
<dbReference type="GO" id="GO:0140662">
    <property type="term" value="F:ATP-dependent protein folding chaperone"/>
    <property type="evidence" value="ECO:0007669"/>
    <property type="project" value="InterPro"/>
</dbReference>
<dbReference type="GO" id="GO:0031072">
    <property type="term" value="F:heat shock protein binding"/>
    <property type="evidence" value="ECO:0000318"/>
    <property type="project" value="GO_Central"/>
</dbReference>
<dbReference type="GO" id="GO:0044183">
    <property type="term" value="F:protein folding chaperone"/>
    <property type="evidence" value="ECO:0000318"/>
    <property type="project" value="GO_Central"/>
</dbReference>
<dbReference type="GO" id="GO:0051082">
    <property type="term" value="F:unfolded protein binding"/>
    <property type="evidence" value="ECO:0007669"/>
    <property type="project" value="InterPro"/>
</dbReference>
<dbReference type="GO" id="GO:0051085">
    <property type="term" value="P:chaperone cofactor-dependent protein refolding"/>
    <property type="evidence" value="ECO:0000318"/>
    <property type="project" value="GO_Central"/>
</dbReference>
<dbReference type="GO" id="GO:0042026">
    <property type="term" value="P:protein refolding"/>
    <property type="evidence" value="ECO:0000318"/>
    <property type="project" value="GO_Central"/>
</dbReference>
<dbReference type="CDD" id="cd10234">
    <property type="entry name" value="ASKHA_NBD_HSP70_DnaK-like"/>
    <property type="match status" value="1"/>
</dbReference>
<dbReference type="FunFam" id="2.60.34.10:FF:000014">
    <property type="entry name" value="Chaperone protein DnaK HSP70"/>
    <property type="match status" value="1"/>
</dbReference>
<dbReference type="FunFam" id="1.20.1270.10:FF:000001">
    <property type="entry name" value="Molecular chaperone DnaK"/>
    <property type="match status" value="1"/>
</dbReference>
<dbReference type="FunFam" id="3.30.420.40:FF:000004">
    <property type="entry name" value="Molecular chaperone DnaK"/>
    <property type="match status" value="1"/>
</dbReference>
<dbReference type="FunFam" id="3.90.640.10:FF:000003">
    <property type="entry name" value="Molecular chaperone DnaK"/>
    <property type="match status" value="1"/>
</dbReference>
<dbReference type="Gene3D" id="1.20.1270.10">
    <property type="match status" value="1"/>
</dbReference>
<dbReference type="Gene3D" id="3.30.420.40">
    <property type="match status" value="2"/>
</dbReference>
<dbReference type="Gene3D" id="3.90.640.10">
    <property type="entry name" value="Actin, Chain A, domain 4"/>
    <property type="match status" value="1"/>
</dbReference>
<dbReference type="Gene3D" id="2.60.34.10">
    <property type="entry name" value="Substrate Binding Domain Of DNAk, Chain A, domain 1"/>
    <property type="match status" value="1"/>
</dbReference>
<dbReference type="HAMAP" id="MF_00332">
    <property type="entry name" value="DnaK"/>
    <property type="match status" value="1"/>
</dbReference>
<dbReference type="InterPro" id="IPR043129">
    <property type="entry name" value="ATPase_NBD"/>
</dbReference>
<dbReference type="InterPro" id="IPR012725">
    <property type="entry name" value="Chaperone_DnaK"/>
</dbReference>
<dbReference type="InterPro" id="IPR018181">
    <property type="entry name" value="Heat_shock_70_CS"/>
</dbReference>
<dbReference type="InterPro" id="IPR029048">
    <property type="entry name" value="HSP70_C_sf"/>
</dbReference>
<dbReference type="InterPro" id="IPR029047">
    <property type="entry name" value="HSP70_peptide-bd_sf"/>
</dbReference>
<dbReference type="InterPro" id="IPR013126">
    <property type="entry name" value="Hsp_70_fam"/>
</dbReference>
<dbReference type="NCBIfam" id="NF001413">
    <property type="entry name" value="PRK00290.1"/>
    <property type="match status" value="1"/>
</dbReference>
<dbReference type="NCBIfam" id="TIGR02350">
    <property type="entry name" value="prok_dnaK"/>
    <property type="match status" value="1"/>
</dbReference>
<dbReference type="PANTHER" id="PTHR19375">
    <property type="entry name" value="HEAT SHOCK PROTEIN 70KDA"/>
    <property type="match status" value="1"/>
</dbReference>
<dbReference type="Pfam" id="PF00012">
    <property type="entry name" value="HSP70"/>
    <property type="match status" value="1"/>
</dbReference>
<dbReference type="PRINTS" id="PR00301">
    <property type="entry name" value="HEATSHOCK70"/>
</dbReference>
<dbReference type="SUPFAM" id="SSF53067">
    <property type="entry name" value="Actin-like ATPase domain"/>
    <property type="match status" value="2"/>
</dbReference>
<dbReference type="SUPFAM" id="SSF100934">
    <property type="entry name" value="Heat shock protein 70kD (HSP70), C-terminal subdomain"/>
    <property type="match status" value="1"/>
</dbReference>
<dbReference type="SUPFAM" id="SSF100920">
    <property type="entry name" value="Heat shock protein 70kD (HSP70), peptide-binding domain"/>
    <property type="match status" value="1"/>
</dbReference>
<dbReference type="PROSITE" id="PS00297">
    <property type="entry name" value="HSP70_1"/>
    <property type="match status" value="1"/>
</dbReference>
<dbReference type="PROSITE" id="PS00329">
    <property type="entry name" value="HSP70_2"/>
    <property type="match status" value="1"/>
</dbReference>
<dbReference type="PROSITE" id="PS01036">
    <property type="entry name" value="HSP70_3"/>
    <property type="match status" value="1"/>
</dbReference>
<accession>O67118</accession>
<gene>
    <name type="primary">dnaK</name>
    <name type="ordered locus">aq_996</name>
</gene>
<organism>
    <name type="scientific">Aquifex aeolicus (strain VF5)</name>
    <dbReference type="NCBI Taxonomy" id="224324"/>
    <lineage>
        <taxon>Bacteria</taxon>
        <taxon>Pseudomonadati</taxon>
        <taxon>Aquificota</taxon>
        <taxon>Aquificia</taxon>
        <taxon>Aquificales</taxon>
        <taxon>Aquificaceae</taxon>
        <taxon>Aquifex</taxon>
    </lineage>
</organism>
<feature type="chain" id="PRO_0000078412" description="Chaperone protein DnaK">
    <location>
        <begin position="1"/>
        <end position="632"/>
    </location>
</feature>
<feature type="region of interest" description="Disordered" evidence="2">
    <location>
        <begin position="603"/>
        <end position="632"/>
    </location>
</feature>
<feature type="compositionally biased region" description="Basic and acidic residues" evidence="2">
    <location>
        <begin position="615"/>
        <end position="632"/>
    </location>
</feature>
<feature type="modified residue" description="Phosphothreonine; by autocatalysis" evidence="1">
    <location>
        <position position="202"/>
    </location>
</feature>
<reference key="1">
    <citation type="journal article" date="1998" name="Nature">
        <title>The complete genome of the hyperthermophilic bacterium Aquifex aeolicus.</title>
        <authorList>
            <person name="Deckert G."/>
            <person name="Warren P.V."/>
            <person name="Gaasterland T."/>
            <person name="Young W.G."/>
            <person name="Lenox A.L."/>
            <person name="Graham D.E."/>
            <person name="Overbeek R."/>
            <person name="Snead M.A."/>
            <person name="Keller M."/>
            <person name="Aujay M."/>
            <person name="Huber R."/>
            <person name="Feldman R.A."/>
            <person name="Short J.M."/>
            <person name="Olsen G.J."/>
            <person name="Swanson R.V."/>
        </authorList>
    </citation>
    <scope>NUCLEOTIDE SEQUENCE [LARGE SCALE GENOMIC DNA]</scope>
    <source>
        <strain>VF5</strain>
    </source>
</reference>
<sequence>MAEKKEKIIGIDLGTTNSVVSVMMGDEAVVIQNQEGSRLTPSVVSWTKEKEILVGEPAKRRAILDPENTVYESKRFIGRKFEEVKEEAKRVSYKVVPDEKGDAAFDIPNAGKLVRPEEVGAHVLRKLKEAAEAFLGEPVKKAVITVPAYFNERQRQATKDAGKIAGLEVVRILNEPTAAAMAYGLHKKDNVRILVYDFGGGTFDVSILEGGEGVIEVKVTAGDTHLGGANIDERIMDWLIEEFKKETGIDLRKDRTALQRLKEASEQAKKELSFKMETEINLPFITIDPNTNQPLHLQKKLTRARLEEMIKDIVDRTIDIVKQALEDAKLKPSDIDEVVLVGGSTRIPLVQQRIKEFFGKEPHKGLNPDEVVAMGAAIQAGVLAGEVKEIVLVDVTPLSLGVETYGGVMTVLIPRNTPIPVRKCEIFTTAHDYQTEVEIHVLQGERPLAKDNKSLAKFYLTGIPPAPRGVPKIEVCFDIDADGILHVTAKDLGTGKEQSVRVEISSGLTPEEIERIIKEAEEHAEEDRKKKELIEAKNQLDHLVYQLEKALKEAGDKVPADVKSEAEKVIEEAKKTIETATEIEQVKQVTEKVLQVSSKMGTTLYGEAGKQAGGGEKKDEGGEGEVEAKPVD</sequence>
<name>DNAK_AQUAE</name>
<comment type="function">
    <text evidence="1">Acts as a chaperone.</text>
</comment>
<comment type="induction">
    <text evidence="1">By stress conditions e.g. heat shock (By similarity).</text>
</comment>
<comment type="similarity">
    <text evidence="3">Belongs to the heat shock protein 70 family.</text>
</comment>
<proteinExistence type="inferred from homology"/>